<dbReference type="EMBL" id="BX571965">
    <property type="protein sequence ID" value="CAH36329.1"/>
    <property type="molecule type" value="Genomic_DNA"/>
</dbReference>
<dbReference type="RefSeq" id="WP_004193961.1">
    <property type="nucleotide sequence ID" value="NZ_CP009538.1"/>
</dbReference>
<dbReference type="RefSeq" id="YP_108922.1">
    <property type="nucleotide sequence ID" value="NC_006350.1"/>
</dbReference>
<dbReference type="SMR" id="Q63SJ4"/>
<dbReference type="STRING" id="272560.BPSL2326"/>
<dbReference type="KEGG" id="bps:BPSL2326"/>
<dbReference type="PATRIC" id="fig|272560.51.peg.3097"/>
<dbReference type="eggNOG" id="COG2924">
    <property type="taxonomic scope" value="Bacteria"/>
</dbReference>
<dbReference type="Proteomes" id="UP000000605">
    <property type="component" value="Chromosome 1"/>
</dbReference>
<dbReference type="GO" id="GO:0005829">
    <property type="term" value="C:cytosol"/>
    <property type="evidence" value="ECO:0007669"/>
    <property type="project" value="TreeGrafter"/>
</dbReference>
<dbReference type="GO" id="GO:0005506">
    <property type="term" value="F:iron ion binding"/>
    <property type="evidence" value="ECO:0007669"/>
    <property type="project" value="UniProtKB-UniRule"/>
</dbReference>
<dbReference type="GO" id="GO:0034599">
    <property type="term" value="P:cellular response to oxidative stress"/>
    <property type="evidence" value="ECO:0007669"/>
    <property type="project" value="TreeGrafter"/>
</dbReference>
<dbReference type="FunFam" id="1.10.3880.10:FF:000001">
    <property type="entry name" value="Probable Fe(2+)-trafficking protein"/>
    <property type="match status" value="1"/>
</dbReference>
<dbReference type="Gene3D" id="1.10.3880.10">
    <property type="entry name" value="Fe(II) trafficking protein YggX"/>
    <property type="match status" value="1"/>
</dbReference>
<dbReference type="HAMAP" id="MF_00686">
    <property type="entry name" value="Fe_traffic_YggX"/>
    <property type="match status" value="1"/>
</dbReference>
<dbReference type="InterPro" id="IPR007457">
    <property type="entry name" value="Fe_traffick_prot_YggX"/>
</dbReference>
<dbReference type="InterPro" id="IPR036766">
    <property type="entry name" value="Fe_traffick_prot_YggX_sf"/>
</dbReference>
<dbReference type="NCBIfam" id="NF003817">
    <property type="entry name" value="PRK05408.1"/>
    <property type="match status" value="1"/>
</dbReference>
<dbReference type="PANTHER" id="PTHR36965">
    <property type="entry name" value="FE(2+)-TRAFFICKING PROTEIN-RELATED"/>
    <property type="match status" value="1"/>
</dbReference>
<dbReference type="PANTHER" id="PTHR36965:SF1">
    <property type="entry name" value="FE(2+)-TRAFFICKING PROTEIN-RELATED"/>
    <property type="match status" value="1"/>
</dbReference>
<dbReference type="Pfam" id="PF04362">
    <property type="entry name" value="Iron_traffic"/>
    <property type="match status" value="1"/>
</dbReference>
<dbReference type="PIRSF" id="PIRSF029827">
    <property type="entry name" value="Fe_traffic_YggX"/>
    <property type="match status" value="1"/>
</dbReference>
<dbReference type="SUPFAM" id="SSF111148">
    <property type="entry name" value="YggX-like"/>
    <property type="match status" value="1"/>
</dbReference>
<feature type="chain" id="PRO_0000214474" description="Probable Fe(2+)-trafficking protein">
    <location>
        <begin position="1"/>
        <end position="91"/>
    </location>
</feature>
<sequence>MARMIHCAKLGKEAEGLDFPPLPGELGKRLYESVSKQAWQDWLKQQTMLINENRLNMADPRARQYLMKQTEKYFFGEGADQASGYVPPAQG</sequence>
<proteinExistence type="inferred from homology"/>
<organism>
    <name type="scientific">Burkholderia pseudomallei (strain K96243)</name>
    <dbReference type="NCBI Taxonomy" id="272560"/>
    <lineage>
        <taxon>Bacteria</taxon>
        <taxon>Pseudomonadati</taxon>
        <taxon>Pseudomonadota</taxon>
        <taxon>Betaproteobacteria</taxon>
        <taxon>Burkholderiales</taxon>
        <taxon>Burkholderiaceae</taxon>
        <taxon>Burkholderia</taxon>
        <taxon>pseudomallei group</taxon>
    </lineage>
</organism>
<reference key="1">
    <citation type="journal article" date="2004" name="Proc. Natl. Acad. Sci. U.S.A.">
        <title>Genomic plasticity of the causative agent of melioidosis, Burkholderia pseudomallei.</title>
        <authorList>
            <person name="Holden M.T.G."/>
            <person name="Titball R.W."/>
            <person name="Peacock S.J."/>
            <person name="Cerdeno-Tarraga A.-M."/>
            <person name="Atkins T."/>
            <person name="Crossman L.C."/>
            <person name="Pitt T."/>
            <person name="Churcher C."/>
            <person name="Mungall K.L."/>
            <person name="Bentley S.D."/>
            <person name="Sebaihia M."/>
            <person name="Thomson N.R."/>
            <person name="Bason N."/>
            <person name="Beacham I.R."/>
            <person name="Brooks K."/>
            <person name="Brown K.A."/>
            <person name="Brown N.F."/>
            <person name="Challis G.L."/>
            <person name="Cherevach I."/>
            <person name="Chillingworth T."/>
            <person name="Cronin A."/>
            <person name="Crossett B."/>
            <person name="Davis P."/>
            <person name="DeShazer D."/>
            <person name="Feltwell T."/>
            <person name="Fraser A."/>
            <person name="Hance Z."/>
            <person name="Hauser H."/>
            <person name="Holroyd S."/>
            <person name="Jagels K."/>
            <person name="Keith K.E."/>
            <person name="Maddison M."/>
            <person name="Moule S."/>
            <person name="Price C."/>
            <person name="Quail M.A."/>
            <person name="Rabbinowitsch E."/>
            <person name="Rutherford K."/>
            <person name="Sanders M."/>
            <person name="Simmonds M."/>
            <person name="Songsivilai S."/>
            <person name="Stevens K."/>
            <person name="Tumapa S."/>
            <person name="Vesaratchavest M."/>
            <person name="Whitehead S."/>
            <person name="Yeats C."/>
            <person name="Barrell B.G."/>
            <person name="Oyston P.C.F."/>
            <person name="Parkhill J."/>
        </authorList>
    </citation>
    <scope>NUCLEOTIDE SEQUENCE [LARGE SCALE GENOMIC DNA]</scope>
    <source>
        <strain>K96243</strain>
    </source>
</reference>
<name>FETP_BURPS</name>
<protein>
    <recommendedName>
        <fullName evidence="1">Probable Fe(2+)-trafficking protein</fullName>
    </recommendedName>
</protein>
<keyword id="KW-0408">Iron</keyword>
<keyword id="KW-1185">Reference proteome</keyword>
<comment type="function">
    <text evidence="1">Could be a mediator in iron transactions between iron acquisition and iron-requiring processes, such as synthesis and/or repair of Fe-S clusters in biosynthetic enzymes.</text>
</comment>
<comment type="similarity">
    <text evidence="1">Belongs to the Fe(2+)-trafficking protein family.</text>
</comment>
<accession>Q63SJ4</accession>
<gene>
    <name type="ordered locus">BPSL2326</name>
</gene>
<evidence type="ECO:0000255" key="1">
    <source>
        <dbReference type="HAMAP-Rule" id="MF_00686"/>
    </source>
</evidence>